<dbReference type="EC" id="1.13.11.6" evidence="1"/>
<dbReference type="EMBL" id="AM920689">
    <property type="protein sequence ID" value="CAP52066.1"/>
    <property type="molecule type" value="Genomic_DNA"/>
</dbReference>
<dbReference type="SMR" id="B0RUZ7"/>
<dbReference type="KEGG" id="xca:xcc-b100_2705"/>
<dbReference type="HOGENOM" id="CLU_095765_0_0_6"/>
<dbReference type="UniPathway" id="UPA00253">
    <property type="reaction ID" value="UER00330"/>
</dbReference>
<dbReference type="Proteomes" id="UP000001188">
    <property type="component" value="Chromosome"/>
</dbReference>
<dbReference type="GO" id="GO:0000334">
    <property type="term" value="F:3-hydroxyanthranilate 3,4-dioxygenase activity"/>
    <property type="evidence" value="ECO:0007669"/>
    <property type="project" value="UniProtKB-UniRule"/>
</dbReference>
<dbReference type="GO" id="GO:0008198">
    <property type="term" value="F:ferrous iron binding"/>
    <property type="evidence" value="ECO:0007669"/>
    <property type="project" value="UniProtKB-UniRule"/>
</dbReference>
<dbReference type="GO" id="GO:0043420">
    <property type="term" value="P:anthranilate metabolic process"/>
    <property type="evidence" value="ECO:0007669"/>
    <property type="project" value="UniProtKB-UniRule"/>
</dbReference>
<dbReference type="GO" id="GO:0006569">
    <property type="term" value="P:L-tryptophan catabolic process"/>
    <property type="evidence" value="ECO:0007669"/>
    <property type="project" value="UniProtKB-UniRule"/>
</dbReference>
<dbReference type="GO" id="GO:0009435">
    <property type="term" value="P:NAD biosynthetic process"/>
    <property type="evidence" value="ECO:0007669"/>
    <property type="project" value="UniProtKB-UniPathway"/>
</dbReference>
<dbReference type="GO" id="GO:0019805">
    <property type="term" value="P:quinolinate biosynthetic process"/>
    <property type="evidence" value="ECO:0007669"/>
    <property type="project" value="UniProtKB-UniRule"/>
</dbReference>
<dbReference type="CDD" id="cd06123">
    <property type="entry name" value="cupin_HAO"/>
    <property type="match status" value="1"/>
</dbReference>
<dbReference type="Gene3D" id="2.60.120.10">
    <property type="entry name" value="Jelly Rolls"/>
    <property type="match status" value="1"/>
</dbReference>
<dbReference type="HAMAP" id="MF_00825">
    <property type="entry name" value="3_HAO"/>
    <property type="match status" value="1"/>
</dbReference>
<dbReference type="InterPro" id="IPR010329">
    <property type="entry name" value="3hydroanth_dOase"/>
</dbReference>
<dbReference type="InterPro" id="IPR014710">
    <property type="entry name" value="RmlC-like_jellyroll"/>
</dbReference>
<dbReference type="InterPro" id="IPR011051">
    <property type="entry name" value="RmlC_Cupin_sf"/>
</dbReference>
<dbReference type="NCBIfam" id="TIGR03037">
    <property type="entry name" value="anthran_nbaC"/>
    <property type="match status" value="1"/>
</dbReference>
<dbReference type="NCBIfam" id="NF009763">
    <property type="entry name" value="PRK13264.1"/>
    <property type="match status" value="1"/>
</dbReference>
<dbReference type="PANTHER" id="PTHR15497">
    <property type="entry name" value="3-HYDROXYANTHRANILATE 3,4-DIOXYGENASE"/>
    <property type="match status" value="1"/>
</dbReference>
<dbReference type="PANTHER" id="PTHR15497:SF1">
    <property type="entry name" value="3-HYDROXYANTHRANILATE 3,4-DIOXYGENASE"/>
    <property type="match status" value="1"/>
</dbReference>
<dbReference type="Pfam" id="PF06052">
    <property type="entry name" value="3-HAO"/>
    <property type="match status" value="1"/>
</dbReference>
<dbReference type="SUPFAM" id="SSF51182">
    <property type="entry name" value="RmlC-like cupins"/>
    <property type="match status" value="1"/>
</dbReference>
<sequence length="176" mass="20172">MLVPPINLHAWVEQHRHLLKPPVGNKCIQQDGFIIMIVGGPNARTDYHYDEGPEWFFQLEGEMVLKVQDDGTARDIPIRAGEIFLLPPKVPHSPQRAAGSIGLVIERERLPHEQDGLQWYCPQCNHKLYEAMFPLENIETDFPPVFDHFYRSLALRTCMQCGHVHPAPERYAAIEA</sequence>
<proteinExistence type="inferred from homology"/>
<name>3HAO_XANCB</name>
<feature type="chain" id="PRO_1000134551" description="3-hydroxyanthranilate 3,4-dioxygenase">
    <location>
        <begin position="1"/>
        <end position="176"/>
    </location>
</feature>
<feature type="binding site" evidence="1">
    <location>
        <position position="44"/>
    </location>
    <ligand>
        <name>O2</name>
        <dbReference type="ChEBI" id="CHEBI:15379"/>
    </ligand>
</feature>
<feature type="binding site" evidence="1">
    <location>
        <position position="48"/>
    </location>
    <ligand>
        <name>Fe cation</name>
        <dbReference type="ChEBI" id="CHEBI:24875"/>
        <label>1</label>
        <note>catalytic</note>
    </ligand>
</feature>
<feature type="binding site" evidence="1">
    <location>
        <position position="54"/>
    </location>
    <ligand>
        <name>Fe cation</name>
        <dbReference type="ChEBI" id="CHEBI:24875"/>
        <label>1</label>
        <note>catalytic</note>
    </ligand>
</feature>
<feature type="binding site" evidence="1">
    <location>
        <position position="54"/>
    </location>
    <ligand>
        <name>substrate</name>
    </ligand>
</feature>
<feature type="binding site" evidence="1">
    <location>
        <position position="92"/>
    </location>
    <ligand>
        <name>Fe cation</name>
        <dbReference type="ChEBI" id="CHEBI:24875"/>
        <label>1</label>
        <note>catalytic</note>
    </ligand>
</feature>
<feature type="binding site" evidence="1">
    <location>
        <position position="96"/>
    </location>
    <ligand>
        <name>substrate</name>
    </ligand>
</feature>
<feature type="binding site" evidence="1">
    <location>
        <position position="106"/>
    </location>
    <ligand>
        <name>substrate</name>
    </ligand>
</feature>
<feature type="binding site" evidence="1">
    <location>
        <position position="121"/>
    </location>
    <ligand>
        <name>Fe cation</name>
        <dbReference type="ChEBI" id="CHEBI:24875"/>
        <label>2</label>
    </ligand>
</feature>
<feature type="binding site" evidence="1">
    <location>
        <position position="124"/>
    </location>
    <ligand>
        <name>Fe cation</name>
        <dbReference type="ChEBI" id="CHEBI:24875"/>
        <label>2</label>
    </ligand>
</feature>
<feature type="binding site" evidence="1">
    <location>
        <position position="158"/>
    </location>
    <ligand>
        <name>Fe cation</name>
        <dbReference type="ChEBI" id="CHEBI:24875"/>
        <label>2</label>
    </ligand>
</feature>
<feature type="binding site" evidence="1">
    <location>
        <position position="161"/>
    </location>
    <ligand>
        <name>Fe cation</name>
        <dbReference type="ChEBI" id="CHEBI:24875"/>
        <label>2</label>
    </ligand>
</feature>
<protein>
    <recommendedName>
        <fullName evidence="1">3-hydroxyanthranilate 3,4-dioxygenase</fullName>
        <ecNumber evidence="1">1.13.11.6</ecNumber>
    </recommendedName>
    <alternativeName>
        <fullName evidence="1">3-hydroxyanthranilate oxygenase</fullName>
        <shortName evidence="1">3-HAO</shortName>
    </alternativeName>
    <alternativeName>
        <fullName evidence="1">3-hydroxyanthranilic acid dioxygenase</fullName>
        <shortName evidence="1">HAD</shortName>
    </alternativeName>
</protein>
<evidence type="ECO:0000255" key="1">
    <source>
        <dbReference type="HAMAP-Rule" id="MF_00825"/>
    </source>
</evidence>
<organism>
    <name type="scientific">Xanthomonas campestris pv. campestris (strain B100)</name>
    <dbReference type="NCBI Taxonomy" id="509169"/>
    <lineage>
        <taxon>Bacteria</taxon>
        <taxon>Pseudomonadati</taxon>
        <taxon>Pseudomonadota</taxon>
        <taxon>Gammaproteobacteria</taxon>
        <taxon>Lysobacterales</taxon>
        <taxon>Lysobacteraceae</taxon>
        <taxon>Xanthomonas</taxon>
    </lineage>
</organism>
<accession>B0RUZ7</accession>
<comment type="function">
    <text evidence="1">Catalyzes the oxidative ring opening of 3-hydroxyanthranilate to 2-amino-3-carboxymuconate semialdehyde, which spontaneously cyclizes to quinolinate.</text>
</comment>
<comment type="catalytic activity">
    <reaction evidence="1">
        <text>3-hydroxyanthranilate + O2 = (2Z,4Z)-2-amino-3-carboxymuconate 6-semialdehyde</text>
        <dbReference type="Rhea" id="RHEA:17953"/>
        <dbReference type="ChEBI" id="CHEBI:15379"/>
        <dbReference type="ChEBI" id="CHEBI:36559"/>
        <dbReference type="ChEBI" id="CHEBI:77612"/>
        <dbReference type="EC" id="1.13.11.6"/>
    </reaction>
</comment>
<comment type="cofactor">
    <cofactor evidence="1">
        <name>Fe(2+)</name>
        <dbReference type="ChEBI" id="CHEBI:29033"/>
    </cofactor>
    <text evidence="1">Binds 2 Fe(2+) ions per subunit.</text>
</comment>
<comment type="pathway">
    <text evidence="1">Cofactor biosynthesis; NAD(+) biosynthesis; quinolinate from L-kynurenine: step 3/3.</text>
</comment>
<comment type="subunit">
    <text evidence="1">Homodimer.</text>
</comment>
<comment type="similarity">
    <text evidence="1">Belongs to the 3-HAO family.</text>
</comment>
<reference key="1">
    <citation type="journal article" date="2008" name="J. Biotechnol.">
        <title>The genome of Xanthomonas campestris pv. campestris B100 and its use for the reconstruction of metabolic pathways involved in xanthan biosynthesis.</title>
        <authorList>
            <person name="Vorhoelter F.-J."/>
            <person name="Schneiker S."/>
            <person name="Goesmann A."/>
            <person name="Krause L."/>
            <person name="Bekel T."/>
            <person name="Kaiser O."/>
            <person name="Linke B."/>
            <person name="Patschkowski T."/>
            <person name="Rueckert C."/>
            <person name="Schmid J."/>
            <person name="Sidhu V.K."/>
            <person name="Sieber V."/>
            <person name="Tauch A."/>
            <person name="Watt S.A."/>
            <person name="Weisshaar B."/>
            <person name="Becker A."/>
            <person name="Niehaus K."/>
            <person name="Puehler A."/>
        </authorList>
    </citation>
    <scope>NUCLEOTIDE SEQUENCE [LARGE SCALE GENOMIC DNA]</scope>
    <source>
        <strain>B100</strain>
    </source>
</reference>
<keyword id="KW-0223">Dioxygenase</keyword>
<keyword id="KW-0408">Iron</keyword>
<keyword id="KW-0479">Metal-binding</keyword>
<keyword id="KW-0560">Oxidoreductase</keyword>
<keyword id="KW-0662">Pyridine nucleotide biosynthesis</keyword>
<gene>
    <name evidence="1" type="primary">nbaC</name>
    <name type="ordered locus">xcc-b100_2705</name>
</gene>